<protein>
    <recommendedName>
        <fullName evidence="1">Peptide chain release factor 3</fullName>
        <shortName evidence="1">RF-3</shortName>
    </recommendedName>
</protein>
<comment type="function">
    <text evidence="1">Increases the formation of ribosomal termination complexes and stimulates activities of RF-1 and RF-2. It binds guanine nucleotides and has strong preference for UGA stop codons. It may interact directly with the ribosome. The stimulation of RF-1 and RF-2 is significantly reduced by GTP and GDP, but not by GMP.</text>
</comment>
<comment type="subcellular location">
    <subcellularLocation>
        <location evidence="1">Cytoplasm</location>
    </subcellularLocation>
</comment>
<comment type="similarity">
    <text evidence="1">Belongs to the TRAFAC class translation factor GTPase superfamily. Classic translation factor GTPase family. PrfC subfamily.</text>
</comment>
<keyword id="KW-0963">Cytoplasm</keyword>
<keyword id="KW-0342">GTP-binding</keyword>
<keyword id="KW-0547">Nucleotide-binding</keyword>
<keyword id="KW-0648">Protein biosynthesis</keyword>
<keyword id="KW-1185">Reference proteome</keyword>
<accession>Q3IHI5</accession>
<dbReference type="EMBL" id="CR954246">
    <property type="protein sequence ID" value="CAI85740.1"/>
    <property type="molecule type" value="Genomic_DNA"/>
</dbReference>
<dbReference type="SMR" id="Q3IHI5"/>
<dbReference type="STRING" id="326442.PSHAa0655"/>
<dbReference type="KEGG" id="pha:PSHAa0655"/>
<dbReference type="PATRIC" id="fig|326442.8.peg.619"/>
<dbReference type="eggNOG" id="COG4108">
    <property type="taxonomic scope" value="Bacteria"/>
</dbReference>
<dbReference type="HOGENOM" id="CLU_002794_2_1_6"/>
<dbReference type="BioCyc" id="PHAL326442:PSHA_RS03205-MONOMER"/>
<dbReference type="Proteomes" id="UP000006843">
    <property type="component" value="Chromosome I"/>
</dbReference>
<dbReference type="GO" id="GO:0005829">
    <property type="term" value="C:cytosol"/>
    <property type="evidence" value="ECO:0007669"/>
    <property type="project" value="TreeGrafter"/>
</dbReference>
<dbReference type="GO" id="GO:0005525">
    <property type="term" value="F:GTP binding"/>
    <property type="evidence" value="ECO:0007669"/>
    <property type="project" value="UniProtKB-UniRule"/>
</dbReference>
<dbReference type="GO" id="GO:0003924">
    <property type="term" value="F:GTPase activity"/>
    <property type="evidence" value="ECO:0007669"/>
    <property type="project" value="InterPro"/>
</dbReference>
<dbReference type="GO" id="GO:0097216">
    <property type="term" value="F:guanosine tetraphosphate binding"/>
    <property type="evidence" value="ECO:0007669"/>
    <property type="project" value="UniProtKB-ARBA"/>
</dbReference>
<dbReference type="GO" id="GO:0016150">
    <property type="term" value="F:translation release factor activity, codon nonspecific"/>
    <property type="evidence" value="ECO:0007669"/>
    <property type="project" value="TreeGrafter"/>
</dbReference>
<dbReference type="GO" id="GO:0016149">
    <property type="term" value="F:translation release factor activity, codon specific"/>
    <property type="evidence" value="ECO:0007669"/>
    <property type="project" value="UniProtKB-UniRule"/>
</dbReference>
<dbReference type="GO" id="GO:0006449">
    <property type="term" value="P:regulation of translational termination"/>
    <property type="evidence" value="ECO:0007669"/>
    <property type="project" value="UniProtKB-UniRule"/>
</dbReference>
<dbReference type="CDD" id="cd04169">
    <property type="entry name" value="RF3"/>
    <property type="match status" value="1"/>
</dbReference>
<dbReference type="CDD" id="cd03689">
    <property type="entry name" value="RF3_II"/>
    <property type="match status" value="1"/>
</dbReference>
<dbReference type="CDD" id="cd16259">
    <property type="entry name" value="RF3_III"/>
    <property type="match status" value="1"/>
</dbReference>
<dbReference type="FunFam" id="2.40.30.10:FF:000040">
    <property type="entry name" value="Peptide chain release factor 3"/>
    <property type="match status" value="1"/>
</dbReference>
<dbReference type="FunFam" id="3.30.70.3280:FF:000001">
    <property type="entry name" value="Peptide chain release factor 3"/>
    <property type="match status" value="1"/>
</dbReference>
<dbReference type="FunFam" id="3.40.50.300:FF:000542">
    <property type="entry name" value="Peptide chain release factor 3"/>
    <property type="match status" value="1"/>
</dbReference>
<dbReference type="Gene3D" id="3.40.50.300">
    <property type="entry name" value="P-loop containing nucleotide triphosphate hydrolases"/>
    <property type="match status" value="2"/>
</dbReference>
<dbReference type="Gene3D" id="3.30.70.3280">
    <property type="entry name" value="Peptide chain release factor 3, domain III"/>
    <property type="match status" value="1"/>
</dbReference>
<dbReference type="HAMAP" id="MF_00072">
    <property type="entry name" value="Rel_fac_3"/>
    <property type="match status" value="1"/>
</dbReference>
<dbReference type="InterPro" id="IPR053905">
    <property type="entry name" value="EF-G-like_DII"/>
</dbReference>
<dbReference type="InterPro" id="IPR035647">
    <property type="entry name" value="EFG_III/V"/>
</dbReference>
<dbReference type="InterPro" id="IPR031157">
    <property type="entry name" value="G_TR_CS"/>
</dbReference>
<dbReference type="InterPro" id="IPR027417">
    <property type="entry name" value="P-loop_NTPase"/>
</dbReference>
<dbReference type="InterPro" id="IPR004548">
    <property type="entry name" value="PrfC"/>
</dbReference>
<dbReference type="InterPro" id="IPR032090">
    <property type="entry name" value="RF3_C"/>
</dbReference>
<dbReference type="InterPro" id="IPR038467">
    <property type="entry name" value="RF3_dom_3_sf"/>
</dbReference>
<dbReference type="InterPro" id="IPR041732">
    <property type="entry name" value="RF3_GTP-bd"/>
</dbReference>
<dbReference type="InterPro" id="IPR005225">
    <property type="entry name" value="Small_GTP-bd"/>
</dbReference>
<dbReference type="InterPro" id="IPR000795">
    <property type="entry name" value="T_Tr_GTP-bd_dom"/>
</dbReference>
<dbReference type="InterPro" id="IPR009000">
    <property type="entry name" value="Transl_B-barrel_sf"/>
</dbReference>
<dbReference type="NCBIfam" id="TIGR00503">
    <property type="entry name" value="prfC"/>
    <property type="match status" value="1"/>
</dbReference>
<dbReference type="NCBIfam" id="NF001964">
    <property type="entry name" value="PRK00741.1"/>
    <property type="match status" value="1"/>
</dbReference>
<dbReference type="NCBIfam" id="TIGR00231">
    <property type="entry name" value="small_GTP"/>
    <property type="match status" value="1"/>
</dbReference>
<dbReference type="PANTHER" id="PTHR43556">
    <property type="entry name" value="PEPTIDE CHAIN RELEASE FACTOR RF3"/>
    <property type="match status" value="1"/>
</dbReference>
<dbReference type="PANTHER" id="PTHR43556:SF2">
    <property type="entry name" value="PEPTIDE CHAIN RELEASE FACTOR RF3"/>
    <property type="match status" value="1"/>
</dbReference>
<dbReference type="Pfam" id="PF22042">
    <property type="entry name" value="EF-G_D2"/>
    <property type="match status" value="1"/>
</dbReference>
<dbReference type="Pfam" id="PF00009">
    <property type="entry name" value="GTP_EFTU"/>
    <property type="match status" value="1"/>
</dbReference>
<dbReference type="Pfam" id="PF16658">
    <property type="entry name" value="RF3_C"/>
    <property type="match status" value="1"/>
</dbReference>
<dbReference type="PRINTS" id="PR00315">
    <property type="entry name" value="ELONGATNFCT"/>
</dbReference>
<dbReference type="SUPFAM" id="SSF54980">
    <property type="entry name" value="EF-G C-terminal domain-like"/>
    <property type="match status" value="1"/>
</dbReference>
<dbReference type="SUPFAM" id="SSF52540">
    <property type="entry name" value="P-loop containing nucleoside triphosphate hydrolases"/>
    <property type="match status" value="1"/>
</dbReference>
<dbReference type="SUPFAM" id="SSF50447">
    <property type="entry name" value="Translation proteins"/>
    <property type="match status" value="1"/>
</dbReference>
<dbReference type="PROSITE" id="PS00301">
    <property type="entry name" value="G_TR_1"/>
    <property type="match status" value="1"/>
</dbReference>
<dbReference type="PROSITE" id="PS51722">
    <property type="entry name" value="G_TR_2"/>
    <property type="match status" value="1"/>
</dbReference>
<feature type="chain" id="PRO_0000242195" description="Peptide chain release factor 3">
    <location>
        <begin position="1"/>
        <end position="529"/>
    </location>
</feature>
<feature type="domain" description="tr-type G">
    <location>
        <begin position="11"/>
        <end position="280"/>
    </location>
</feature>
<feature type="binding site" evidence="1">
    <location>
        <begin position="20"/>
        <end position="27"/>
    </location>
    <ligand>
        <name>GTP</name>
        <dbReference type="ChEBI" id="CHEBI:37565"/>
    </ligand>
</feature>
<feature type="binding site" evidence="1">
    <location>
        <begin position="88"/>
        <end position="92"/>
    </location>
    <ligand>
        <name>GTP</name>
        <dbReference type="ChEBI" id="CHEBI:37565"/>
    </ligand>
</feature>
<feature type="binding site" evidence="1">
    <location>
        <begin position="142"/>
        <end position="145"/>
    </location>
    <ligand>
        <name>GTP</name>
        <dbReference type="ChEBI" id="CHEBI:37565"/>
    </ligand>
</feature>
<sequence>MAEQNLLSEINKRRTFAIISHPDAGKTTITEKVLLFGQAIQKAGTVKGRGSNQHAKSDWMDMEKERGISVTTSVMQFPYKNALVNLLDTPGHEDFSEDTYRTLTAVDSCLMVIDAAKGVEDRTRKLMEVTRLRTTPIVTFMNKCDRDIRDPMELLDEVETELKIACAPITWPIGSGKGFKGVYHIHNDEAVLYKTGQGHKIQDVRTIKGIDNPELVDAIGDDLAAQLRDELELVIGASNEFDLELFLAGELSPVYFGTALGNFGVDHVLDGLTKWAPTPLPRETEDRQVVATEENFTGFVFKIQANMDPKHRDRIAFMRIVSGKYSQGMKMNHVRIGKQVSISDAVTFMAGDRERAGDAFAGDIIGLHNHGTIQIGDTFTQGEKLKFSGIPNFAPELFRRIRLRDPLKQKQLLKGLVQLSEEGAVQVFRPLINNDLIVGAVGVLQFDVVVARLKAEYNVDAIYEGVNVNTARWVSSDDVKKFEDFKRKCESNLALDGGDNLTYIAPSRVNLNLSVERYPEVTFSHTREN</sequence>
<reference key="1">
    <citation type="journal article" date="2005" name="Genome Res.">
        <title>Coping with cold: the genome of the versatile marine Antarctica bacterium Pseudoalteromonas haloplanktis TAC125.</title>
        <authorList>
            <person name="Medigue C."/>
            <person name="Krin E."/>
            <person name="Pascal G."/>
            <person name="Barbe V."/>
            <person name="Bernsel A."/>
            <person name="Bertin P.N."/>
            <person name="Cheung F."/>
            <person name="Cruveiller S."/>
            <person name="D'Amico S."/>
            <person name="Duilio A."/>
            <person name="Fang G."/>
            <person name="Feller G."/>
            <person name="Ho C."/>
            <person name="Mangenot S."/>
            <person name="Marino G."/>
            <person name="Nilsson J."/>
            <person name="Parrilli E."/>
            <person name="Rocha E.P.C."/>
            <person name="Rouy Z."/>
            <person name="Sekowska A."/>
            <person name="Tutino M.L."/>
            <person name="Vallenet D."/>
            <person name="von Heijne G."/>
            <person name="Danchin A."/>
        </authorList>
    </citation>
    <scope>NUCLEOTIDE SEQUENCE [LARGE SCALE GENOMIC DNA]</scope>
    <source>
        <strain>TAC 125</strain>
    </source>
</reference>
<proteinExistence type="inferred from homology"/>
<evidence type="ECO:0000255" key="1">
    <source>
        <dbReference type="HAMAP-Rule" id="MF_00072"/>
    </source>
</evidence>
<organism>
    <name type="scientific">Pseudoalteromonas translucida (strain TAC 125)</name>
    <dbReference type="NCBI Taxonomy" id="326442"/>
    <lineage>
        <taxon>Bacteria</taxon>
        <taxon>Pseudomonadati</taxon>
        <taxon>Pseudomonadota</taxon>
        <taxon>Gammaproteobacteria</taxon>
        <taxon>Alteromonadales</taxon>
        <taxon>Pseudoalteromonadaceae</taxon>
        <taxon>Pseudoalteromonas</taxon>
    </lineage>
</organism>
<gene>
    <name evidence="1" type="primary">prfC</name>
    <name type="ordered locus">PSHAa0655</name>
</gene>
<name>RF3_PSET1</name>